<sequence length="75" mass="7722">MPNGVLGLGNPSRLAALYGLQLAHESQCCQMHNLPSAARQVTVACREEVGITTILAGRDECGVCDKTAGLDGAAP</sequence>
<keyword id="KW-1185">Reference proteome</keyword>
<gene>
    <name type="ordered locus">Rv1545</name>
    <name type="ORF">MTCY48.20</name>
</gene>
<organism>
    <name type="scientific">Mycobacterium tuberculosis (strain ATCC 25618 / H37Rv)</name>
    <dbReference type="NCBI Taxonomy" id="83332"/>
    <lineage>
        <taxon>Bacteria</taxon>
        <taxon>Bacillati</taxon>
        <taxon>Actinomycetota</taxon>
        <taxon>Actinomycetes</taxon>
        <taxon>Mycobacteriales</taxon>
        <taxon>Mycobacteriaceae</taxon>
        <taxon>Mycobacterium</taxon>
        <taxon>Mycobacterium tuberculosis complex</taxon>
    </lineage>
</organism>
<name>Y1545_MYCTU</name>
<protein>
    <recommendedName>
        <fullName>Uncharacterized protein Rv1545</fullName>
    </recommendedName>
</protein>
<reference key="1">
    <citation type="journal article" date="1998" name="Nature">
        <title>Deciphering the biology of Mycobacterium tuberculosis from the complete genome sequence.</title>
        <authorList>
            <person name="Cole S.T."/>
            <person name="Brosch R."/>
            <person name="Parkhill J."/>
            <person name="Garnier T."/>
            <person name="Churcher C.M."/>
            <person name="Harris D.E."/>
            <person name="Gordon S.V."/>
            <person name="Eiglmeier K."/>
            <person name="Gas S."/>
            <person name="Barry C.E. III"/>
            <person name="Tekaia F."/>
            <person name="Badcock K."/>
            <person name="Basham D."/>
            <person name="Brown D."/>
            <person name="Chillingworth T."/>
            <person name="Connor R."/>
            <person name="Davies R.M."/>
            <person name="Devlin K."/>
            <person name="Feltwell T."/>
            <person name="Gentles S."/>
            <person name="Hamlin N."/>
            <person name="Holroyd S."/>
            <person name="Hornsby T."/>
            <person name="Jagels K."/>
            <person name="Krogh A."/>
            <person name="McLean J."/>
            <person name="Moule S."/>
            <person name="Murphy L.D."/>
            <person name="Oliver S."/>
            <person name="Osborne J."/>
            <person name="Quail M.A."/>
            <person name="Rajandream M.A."/>
            <person name="Rogers J."/>
            <person name="Rutter S."/>
            <person name="Seeger K."/>
            <person name="Skelton S."/>
            <person name="Squares S."/>
            <person name="Squares R."/>
            <person name="Sulston J.E."/>
            <person name="Taylor K."/>
            <person name="Whitehead S."/>
            <person name="Barrell B.G."/>
        </authorList>
    </citation>
    <scope>NUCLEOTIDE SEQUENCE [LARGE SCALE GENOMIC DNA]</scope>
    <source>
        <strain>ATCC 25618 / H37Rv</strain>
    </source>
</reference>
<dbReference type="EMBL" id="AL123456">
    <property type="protein sequence ID" value="CCP44309.1"/>
    <property type="molecule type" value="Genomic_DNA"/>
</dbReference>
<dbReference type="PIR" id="F70761">
    <property type="entry name" value="F70761"/>
</dbReference>
<dbReference type="RefSeq" id="NP_216061.1">
    <property type="nucleotide sequence ID" value="NC_000962.3"/>
</dbReference>
<dbReference type="RefSeq" id="WP_003901194.1">
    <property type="nucleotide sequence ID" value="NZ_NVQJ01000004.1"/>
</dbReference>
<dbReference type="STRING" id="83332.Rv1545"/>
<dbReference type="PaxDb" id="83332-Rv1545"/>
<dbReference type="DNASU" id="886398"/>
<dbReference type="GeneID" id="886398"/>
<dbReference type="KEGG" id="mtu:Rv1545"/>
<dbReference type="KEGG" id="mtv:RVBD_1545"/>
<dbReference type="TubercuList" id="Rv1545"/>
<dbReference type="InParanoid" id="P9WLU9"/>
<dbReference type="Proteomes" id="UP000001584">
    <property type="component" value="Chromosome"/>
</dbReference>
<accession>P9WLU9</accession>
<accession>L0T9R4</accession>
<accession>P64871</accession>
<accession>Q10781</accession>
<proteinExistence type="predicted"/>
<feature type="chain" id="PRO_0000103874" description="Uncharacterized protein Rv1545">
    <location>
        <begin position="1"/>
        <end position="75"/>
    </location>
</feature>